<protein>
    <recommendedName>
        <fullName evidence="10">Vesicular inhibitory amino acid transporter</fullName>
    </recommendedName>
    <alternativeName>
        <fullName>Solute carrier family 32 member 1</fullName>
    </alternativeName>
    <alternativeName>
        <fullName evidence="11">Vesicular GABA and glycine transporter</fullName>
    </alternativeName>
    <alternativeName>
        <fullName>Vesicular GABA transporter</fullName>
        <shortName>mVGAT</shortName>
        <shortName>mVIAAT</shortName>
    </alternativeName>
</protein>
<feature type="chain" id="PRO_0000093822" description="Vesicular inhibitory amino acid transporter">
    <location>
        <begin position="1"/>
        <end position="525"/>
    </location>
</feature>
<feature type="topological domain" description="Cytoplasmic" evidence="1">
    <location>
        <begin position="1"/>
        <end position="132"/>
    </location>
</feature>
<feature type="transmembrane region" description="Helical" evidence="2">
    <location>
        <begin position="133"/>
        <end position="153"/>
    </location>
</feature>
<feature type="topological domain" description="Lumenal, vesicle" evidence="1">
    <location>
        <begin position="154"/>
        <end position="204"/>
    </location>
</feature>
<feature type="transmembrane region" description="Helical" evidence="2">
    <location>
        <begin position="205"/>
        <end position="225"/>
    </location>
</feature>
<feature type="topological domain" description="Cytoplasmic" evidence="1">
    <location>
        <begin position="226"/>
        <end position="265"/>
    </location>
</feature>
<feature type="transmembrane region" description="Helical" evidence="2">
    <location>
        <begin position="266"/>
        <end position="286"/>
    </location>
</feature>
<feature type="topological domain" description="Lumenal, vesicle" evidence="1">
    <location>
        <begin position="287"/>
        <end position="305"/>
    </location>
</feature>
<feature type="transmembrane region" description="Helical" evidence="2">
    <location>
        <begin position="306"/>
        <end position="326"/>
    </location>
</feature>
<feature type="topological domain" description="Cytoplasmic" evidence="1">
    <location>
        <begin position="327"/>
        <end position="341"/>
    </location>
</feature>
<feature type="transmembrane region" description="Helical" evidence="2">
    <location>
        <begin position="342"/>
        <end position="362"/>
    </location>
</feature>
<feature type="topological domain" description="Lumenal, vesicle" evidence="1">
    <location>
        <begin position="363"/>
        <end position="383"/>
    </location>
</feature>
<feature type="transmembrane region" description="Helical" evidence="2">
    <location>
        <begin position="384"/>
        <end position="404"/>
    </location>
</feature>
<feature type="topological domain" description="Cytoplasmic" evidence="1">
    <location>
        <begin position="405"/>
        <end position="438"/>
    </location>
</feature>
<feature type="transmembrane region" description="Helical" evidence="2">
    <location>
        <begin position="439"/>
        <end position="459"/>
    </location>
</feature>
<feature type="topological domain" description="Lumenal, vesicle" evidence="1">
    <location>
        <begin position="460"/>
        <end position="461"/>
    </location>
</feature>
<feature type="transmembrane region" description="Helical" evidence="2">
    <location>
        <begin position="462"/>
        <end position="482"/>
    </location>
</feature>
<feature type="topological domain" description="Cytoplasmic" evidence="1">
    <location>
        <begin position="483"/>
        <end position="489"/>
    </location>
</feature>
<feature type="transmembrane region" description="Helical" evidence="2">
    <location>
        <begin position="490"/>
        <end position="510"/>
    </location>
</feature>
<feature type="topological domain" description="Lumenal, vesicle" evidence="1">
    <location>
        <begin position="511"/>
        <end position="525"/>
    </location>
</feature>
<feature type="modified residue" description="3'-nitrotyrosine" evidence="16">
    <location>
        <position position="186"/>
    </location>
</feature>
<feature type="splice variant" id="VSP_007063" description="In isoform 2." evidence="12">
    <original>LIEAYRTNAED</original>
    <variation>KFAGLET</variation>
    <location>
        <begin position="515"/>
        <end position="525"/>
    </location>
</feature>
<feature type="mutagenesis site" description="In a disruption phenotype model increases presynaptic release probability leading to more severe synaptic depression during high-frequency stimulation." evidence="8">
    <original>A</original>
    <variation>T</variation>
    <location>
        <position position="90"/>
    </location>
</feature>
<feature type="mutagenesis site" description="In a disruption phenotype model increases presynaptic release probability leading to more severe synaptic depression during high-frequency stimulation." evidence="8">
    <original>V</original>
    <variation>M</variation>
    <location>
        <position position="263"/>
    </location>
</feature>
<feature type="mutagenesis site" description="In a disruption phenotype model increases presynaptic release probability leading to more severe synaptic depression during high-frequency stimulation." evidence="8">
    <original>L</original>
    <variation>P</variation>
    <location>
        <position position="269"/>
    </location>
</feature>
<feature type="mutagenesis site" description="In a disruption phenotype model increases presynaptic release probability leading to more severe synaptic depression during high-frequency stimulation." evidence="8">
    <original>F</original>
    <variation>C</variation>
    <location>
        <position position="322"/>
    </location>
</feature>
<feature type="sequence conflict" description="In Ref. 1; CAA04864." evidence="13" ref="1">
    <original>G</original>
    <variation>E</variation>
    <location>
        <position position="432"/>
    </location>
</feature>
<comment type="function">
    <text evidence="1 4 6 7 9">Antiporter that exchanges vesicular protons for cytosolic 4-aminobutanoate or to a lesser extend glycine, thus allowing their secretion from nerve terminals (PubMed:16701208, PubMed:26912364, PubMed:27601664, PubMed:9395291). The transport is equally dependent on the chemical and electrical components of the proton gradient (PubMed:27601664, PubMed:9395291). May also transport beta-alanine (By similarity). Acidification of GABAergic synaptic vesicles is a prerequisite for 4-aminobutanoate uptake (PubMed:27601664).</text>
</comment>
<comment type="catalytic activity">
    <reaction evidence="4 6 7 14">
        <text>4-aminobutanoate(out) + n H(+)(in) = 4-aminobutanoate(in) + n H(+)(out)</text>
        <dbReference type="Rhea" id="RHEA:70979"/>
        <dbReference type="ChEBI" id="CHEBI:15378"/>
        <dbReference type="ChEBI" id="CHEBI:59888"/>
    </reaction>
</comment>
<comment type="catalytic activity">
    <reaction evidence="4 6 14">
        <text>glycine(out) + n H(+)(in) = glycine(in) + n H(+)(out)</text>
        <dbReference type="Rhea" id="RHEA:70983"/>
        <dbReference type="ChEBI" id="CHEBI:15378"/>
        <dbReference type="ChEBI" id="CHEBI:57305"/>
    </reaction>
</comment>
<comment type="catalytic activity">
    <reaction evidence="1">
        <text>beta-alanine(out) + n H(+)(in) = beta-alanine(in) + n H(+)(out)</text>
        <dbReference type="Rhea" id="RHEA:70987"/>
        <dbReference type="ChEBI" id="CHEBI:15378"/>
        <dbReference type="ChEBI" id="CHEBI:57966"/>
    </reaction>
</comment>
<comment type="activity regulation">
    <text evidence="6">Chloride ions activate 4-aminobutanoate/H(+) transport.</text>
</comment>
<comment type="subcellular location">
    <subcellularLocation>
        <location evidence="1">Cytoplasmic vesicle membrane</location>
        <topology evidence="2">Multi-pass membrane protein</topology>
    </subcellularLocation>
    <subcellularLocation>
        <location evidence="5">Presynapse</location>
    </subcellularLocation>
    <text evidence="1">Presents in glycine-, GABA- or GABA- and glycine-containing boutons.</text>
</comment>
<comment type="alternative products">
    <event type="alternative splicing"/>
    <isoform>
        <id>O35633-1</id>
        <name>1</name>
        <name>b</name>
        <sequence type="displayed"/>
    </isoform>
    <isoform>
        <id>O35633-2</id>
        <name>2</name>
        <name>a</name>
        <sequence type="described" ref="VSP_007063"/>
    </isoform>
</comment>
<comment type="tissue specificity">
    <text evidence="3">Brain and retina. Localized in horizontal cell tips at both rod and cone terminals.</text>
</comment>
<comment type="disruption phenotype">
    <text evidence="4">Deficient mice exhibit embryonic lethality and a cleft palate and omphalocele.</text>
</comment>
<comment type="similarity">
    <text evidence="13">Belongs to the amino acid/polyamine transporter 2 family.</text>
</comment>
<comment type="caution">
    <text evidence="1 6 7">Juge et al. shows that SLC32A1 is a symporter of both 4-aminobutanoate or glycine or beta-alanine with Cl(-) that operates according an electrical gradient without the need for a chemical gradient (By similarity). However Farsi et al. and Egashira et al. confirm that SLC32A1 is an antiporter that exchanges vesicular protons for cytosolic 4-aminobutanoate or glycine and exclude any coupling with chloride (PubMed:26912364, PubMed:27601664).</text>
</comment>
<organism>
    <name type="scientific">Mus musculus</name>
    <name type="common">Mouse</name>
    <dbReference type="NCBI Taxonomy" id="10090"/>
    <lineage>
        <taxon>Eukaryota</taxon>
        <taxon>Metazoa</taxon>
        <taxon>Chordata</taxon>
        <taxon>Craniata</taxon>
        <taxon>Vertebrata</taxon>
        <taxon>Euteleostomi</taxon>
        <taxon>Mammalia</taxon>
        <taxon>Eutheria</taxon>
        <taxon>Euarchontoglires</taxon>
        <taxon>Glires</taxon>
        <taxon>Rodentia</taxon>
        <taxon>Myomorpha</taxon>
        <taxon>Muroidea</taxon>
        <taxon>Muridae</taxon>
        <taxon>Murinae</taxon>
        <taxon>Mus</taxon>
        <taxon>Mus</taxon>
    </lineage>
</organism>
<accession>O35633</accession>
<reference key="1">
    <citation type="journal article" date="1997" name="FEBS Lett.">
        <title>Cloning of a functional vesicular GABA and glycine transporter by screening of genome databases.</title>
        <authorList>
            <person name="Sagne C."/>
            <person name="El Mestikawy S."/>
            <person name="Isambert M.-F."/>
            <person name="Hamon M."/>
            <person name="Henry J.-P."/>
            <person name="Giros B.P."/>
            <person name="Gasnier B."/>
        </authorList>
    </citation>
    <scope>NUCLEOTIDE SEQUENCE [MRNA] (ISOFORM 2)</scope>
    <scope>FUNCTION</scope>
    <scope>TRANSPORTER ACTIVITY</scope>
    <source>
        <strain>BALB/cJ</strain>
        <tissue>Brain</tissue>
    </source>
</reference>
<reference key="2">
    <citation type="journal article" date="2003" name="Brain Res. Mol. Brain Res.">
        <title>Mouse vesicular GABA transporter gene: genomic organization, transcriptional regulation and chromosomal localization.</title>
        <authorList>
            <person name="Ebihara S."/>
            <person name="Obata K."/>
            <person name="Yanagawa Y."/>
        </authorList>
    </citation>
    <scope>NUCLEOTIDE SEQUENCE [GENOMIC DNA] (ISOFORMS 1 AND 2)</scope>
</reference>
<reference key="3">
    <citation type="journal article" date="2004" name="Genome Res.">
        <title>The status, quality, and expansion of the NIH full-length cDNA project: the Mammalian Gene Collection (MGC).</title>
        <authorList>
            <consortium name="The MGC Project Team"/>
        </authorList>
    </citation>
    <scope>NUCLEOTIDE SEQUENCE [LARGE SCALE MRNA] (ISOFORM 1)</scope>
    <source>
        <strain>C57BL/6J</strain>
        <tissue>Brain</tissue>
    </source>
</reference>
<reference key="4">
    <citation type="journal article" date="1999" name="J. Cell Sci.">
        <title>Presence of the vesicular inhibitory amino acid transporter in GABAergic and glycinergic synaptic terminal boutons.</title>
        <authorList>
            <person name="Dumoulin A."/>
            <person name="Rostaing P."/>
            <person name="Bedet C."/>
            <person name="Levi S."/>
            <person name="Isambert M.F."/>
            <person name="Henry J.P."/>
            <person name="Triller A."/>
            <person name="Gasnier B."/>
        </authorList>
    </citation>
    <scope>SUBCELLULAR LOCATION</scope>
</reference>
<reference key="5">
    <citation type="journal article" date="2002" name="J. Comp. Neurol.">
        <title>Cellular localization of the vesicular inhibitory amino acid transporter in the mouse and human retina.</title>
        <authorList>
            <person name="Jellali A."/>
            <person name="Stussi-Garaud C."/>
            <person name="Gasnier B."/>
            <person name="Rendon A."/>
            <person name="Sahel J.-A."/>
            <person name="Dreyfus H."/>
            <person name="Picaud S."/>
        </authorList>
    </citation>
    <scope>TISSUE SPECIFICITY</scope>
</reference>
<reference key="6">
    <citation type="journal article" date="2006" name="Biochemistry">
        <title>Endogenously nitrated proteins in mouse brain: links to neurodegenerative disease.</title>
        <authorList>
            <person name="Sacksteder C.A."/>
            <person name="Qian W.-J."/>
            <person name="Knyushko T.V."/>
            <person name="Wang H."/>
            <person name="Chin M.H."/>
            <person name="Lacan G."/>
            <person name="Melega W.P."/>
            <person name="Camp D.G. II"/>
            <person name="Smith R.D."/>
            <person name="Smith D.J."/>
            <person name="Squier T.C."/>
            <person name="Bigelow D.J."/>
        </authorList>
    </citation>
    <scope>NITRATION [LARGE SCALE ANALYSIS] AT TYR-186</scope>
    <scope>IDENTIFICATION BY MASS SPECTROMETRY [LARGE SCALE ANALYSIS]</scope>
    <source>
        <tissue>Brain</tissue>
    </source>
</reference>
<reference key="7">
    <citation type="journal article" date="2006" name="Neuron">
        <title>A shared vesicular carrier allows synaptic corelease of GABA and glycine.</title>
        <authorList>
            <person name="Wojcik S.M."/>
            <person name="Katsurabayashi S."/>
            <person name="Guillemin I."/>
            <person name="Friauf E."/>
            <person name="Rosenmund C."/>
            <person name="Brose N."/>
            <person name="Rhee J.S."/>
        </authorList>
    </citation>
    <scope>FUNCTION</scope>
    <scope>TRANSPORTER ACTIVITY</scope>
    <scope>DISRUPTION PHENOTYPE</scope>
</reference>
<reference key="8">
    <citation type="journal article" date="2008" name="J. Neurosci.">
        <title>Unique luminal localization of VGAT-C terminus allows for selective labeling of active cortical GABAergic synapses.</title>
        <authorList>
            <person name="Martens H."/>
            <person name="Weston M.C."/>
            <person name="Boulland J.L."/>
            <person name="Groenborg M."/>
            <person name="Grosche J."/>
            <person name="Kacza J."/>
            <person name="Hoffmann A."/>
            <person name="Matteoli M."/>
            <person name="Takamori S."/>
            <person name="Harkany T."/>
            <person name="Chaudhry F.A."/>
            <person name="Rosenmund C."/>
            <person name="Erck C."/>
            <person name="Jahn R."/>
            <person name="Haertig W."/>
        </authorList>
    </citation>
    <scope>SUBCELLULAR LOCATION</scope>
</reference>
<reference key="9">
    <citation type="journal article" date="2010" name="Cell">
        <title>A tissue-specific atlas of mouse protein phosphorylation and expression.</title>
        <authorList>
            <person name="Huttlin E.L."/>
            <person name="Jedrychowski M.P."/>
            <person name="Elias J.E."/>
            <person name="Goswami T."/>
            <person name="Rad R."/>
            <person name="Beausoleil S.A."/>
            <person name="Villen J."/>
            <person name="Haas W."/>
            <person name="Sowa M.E."/>
            <person name="Gygi S.P."/>
        </authorList>
    </citation>
    <scope>IDENTIFICATION BY MASS SPECTROMETRY [LARGE SCALE ANALYSIS]</scope>
    <source>
        <tissue>Brain</tissue>
    </source>
</reference>
<reference key="10">
    <citation type="journal article" date="2016" name="Proc. Natl. Acad. Sci. U.S.A.">
        <title>Unique pH dynamics in GABAergic synaptic vesicles illuminates the mechanism and kinetics of GABA loading.</title>
        <authorList>
            <person name="Egashira Y."/>
            <person name="Takase M."/>
            <person name="Watanabe S."/>
            <person name="Ishida J."/>
            <person name="Fukamizu A."/>
            <person name="Kaneko R."/>
            <person name="Yanagawa Y."/>
            <person name="Takamori S."/>
        </authorList>
    </citation>
    <scope>FUNCTION</scope>
    <scope>TRANSPORTER ACTIVITY</scope>
</reference>
<reference key="11">
    <citation type="journal article" date="2016" name="Science">
        <title>Single-vesicle imaging reveals different transport mechanisms between glutamatergic and GABAergic vesicles.</title>
        <authorList>
            <person name="Farsi Z."/>
            <person name="Preobraschenski J."/>
            <person name="van den Bogaart G."/>
            <person name="Riedel D."/>
            <person name="Jahn R."/>
            <person name="Woehler A."/>
        </authorList>
    </citation>
    <scope>FUNCTION</scope>
    <scope>TRANSPORTER ACTIVITY</scope>
    <scope>ACTIVITY REGULATION</scope>
</reference>
<reference key="12">
    <citation type="journal article" date="2022" name="Ann. Neurol.">
        <title>De Novo Missense Variants in SLC32A1 Cause a Developmental and Epileptic Encephalopathy Due to Impaired GABAergic Neurotransmission.</title>
        <authorList>
            <person name="Platzer K."/>
            <person name="Sticht H."/>
            <person name="Bupp C."/>
            <person name="Ganapathi M."/>
            <person name="Pereira E.M."/>
            <person name="Le Guyader G."/>
            <person name="Bilan F."/>
            <person name="Henderson L.B."/>
            <person name="Lemke J.R."/>
            <person name="Taschenberger H."/>
            <person name="Brose N."/>
            <person name="Abou Jamra R."/>
            <person name="Wojcik S.M."/>
        </authorList>
    </citation>
    <scope>MUTAGENESIS OF ALA-90; VAL-263; LEU-269 AND PHE-322</scope>
</reference>
<dbReference type="EMBL" id="AB080232">
    <property type="protein sequence ID" value="BAC44888.1"/>
    <property type="molecule type" value="Genomic_DNA"/>
</dbReference>
<dbReference type="EMBL" id="AB080232">
    <property type="protein sequence ID" value="BAC44889.1"/>
    <property type="molecule type" value="Genomic_DNA"/>
</dbReference>
<dbReference type="EMBL" id="AJ001598">
    <property type="protein sequence ID" value="CAA04864.1"/>
    <property type="molecule type" value="mRNA"/>
</dbReference>
<dbReference type="EMBL" id="BC052020">
    <property type="protein sequence ID" value="AAH52020.1"/>
    <property type="molecule type" value="mRNA"/>
</dbReference>
<dbReference type="CCDS" id="CCDS38309.1">
    <molecule id="O35633-1"/>
</dbReference>
<dbReference type="RefSeq" id="NP_001408116.1">
    <molecule id="O35633-1"/>
    <property type="nucleotide sequence ID" value="NM_001421187.1"/>
</dbReference>
<dbReference type="RefSeq" id="NP_033534.2">
    <molecule id="O35633-1"/>
    <property type="nucleotide sequence ID" value="NM_009508.3"/>
</dbReference>
<dbReference type="SMR" id="O35633"/>
<dbReference type="BioGRID" id="204520">
    <property type="interactions" value="3"/>
</dbReference>
<dbReference type="FunCoup" id="O35633">
    <property type="interactions" value="165"/>
</dbReference>
<dbReference type="IntAct" id="O35633">
    <property type="interactions" value="1"/>
</dbReference>
<dbReference type="STRING" id="10090.ENSMUSP00000036299"/>
<dbReference type="TCDB" id="2.A.18.5.3">
    <property type="family name" value="the amino acid/auxin permease (aaap) family"/>
</dbReference>
<dbReference type="GlyGen" id="O35633">
    <property type="glycosylation" value="4 sites, 1 N-linked glycan (1 site), 1 O-linked glycan (3 sites)"/>
</dbReference>
<dbReference type="iPTMnet" id="O35633"/>
<dbReference type="PhosphoSitePlus" id="O35633"/>
<dbReference type="SwissPalm" id="O35633"/>
<dbReference type="PaxDb" id="10090-ENSMUSP00000036299"/>
<dbReference type="PeptideAtlas" id="O35633"/>
<dbReference type="ProteomicsDB" id="297883">
    <molecule id="O35633-1"/>
</dbReference>
<dbReference type="ProteomicsDB" id="297884">
    <molecule id="O35633-2"/>
</dbReference>
<dbReference type="ABCD" id="O35633">
    <property type="antibodies" value="2 sequenced antibodies"/>
</dbReference>
<dbReference type="Antibodypedia" id="26904">
    <property type="antibodies" value="275 antibodies from 28 providers"/>
</dbReference>
<dbReference type="DNASU" id="22348"/>
<dbReference type="Ensembl" id="ENSMUST00000045738.5">
    <molecule id="O35633-1"/>
    <property type="protein sequence ID" value="ENSMUSP00000036299.5"/>
    <property type="gene ID" value="ENSMUSG00000037771.12"/>
</dbReference>
<dbReference type="GeneID" id="22348"/>
<dbReference type="KEGG" id="mmu:22348"/>
<dbReference type="UCSC" id="uc008nqk.1">
    <molecule id="O35633-1"/>
    <property type="organism name" value="mouse"/>
</dbReference>
<dbReference type="UCSC" id="uc029uhu.1">
    <molecule id="O35633-2"/>
    <property type="organism name" value="mouse"/>
</dbReference>
<dbReference type="AGR" id="MGI:1194488"/>
<dbReference type="CTD" id="140679"/>
<dbReference type="MGI" id="MGI:1194488">
    <property type="gene designation" value="Slc32a1"/>
</dbReference>
<dbReference type="VEuPathDB" id="HostDB:ENSMUSG00000037771"/>
<dbReference type="eggNOG" id="KOG4303">
    <property type="taxonomic scope" value="Eukaryota"/>
</dbReference>
<dbReference type="GeneTree" id="ENSGT00490000043380"/>
<dbReference type="HOGENOM" id="CLU_036432_0_0_1"/>
<dbReference type="InParanoid" id="O35633"/>
<dbReference type="OMA" id="MKWTHIA"/>
<dbReference type="OrthoDB" id="6021076at2759"/>
<dbReference type="PhylomeDB" id="O35633"/>
<dbReference type="TreeFam" id="TF312818"/>
<dbReference type="Reactome" id="R-MMU-425393">
    <property type="pathway name" value="Transport of inorganic cations/anions and amino acids/oligopeptides"/>
</dbReference>
<dbReference type="Reactome" id="R-MMU-888590">
    <property type="pathway name" value="GABA synthesis, release, reuptake and degradation"/>
</dbReference>
<dbReference type="BioGRID-ORCS" id="22348">
    <property type="hits" value="1 hit in 76 CRISPR screens"/>
</dbReference>
<dbReference type="PRO" id="PR:O35633"/>
<dbReference type="Proteomes" id="UP000000589">
    <property type="component" value="Chromosome 2"/>
</dbReference>
<dbReference type="RNAct" id="O35633">
    <property type="molecule type" value="protein"/>
</dbReference>
<dbReference type="Bgee" id="ENSMUSG00000037771">
    <property type="expression patterns" value="Expressed in dorsal tegmental nucleus and 103 other cell types or tissues"/>
</dbReference>
<dbReference type="ExpressionAtlas" id="O35633">
    <property type="expression patterns" value="baseline and differential"/>
</dbReference>
<dbReference type="GO" id="GO:0009986">
    <property type="term" value="C:cell surface"/>
    <property type="evidence" value="ECO:0000314"/>
    <property type="project" value="MGI"/>
</dbReference>
<dbReference type="GO" id="GO:0051286">
    <property type="term" value="C:cell tip"/>
    <property type="evidence" value="ECO:0000314"/>
    <property type="project" value="MGI"/>
</dbReference>
<dbReference type="GO" id="GO:0044316">
    <property type="term" value="C:cone cell pedicle"/>
    <property type="evidence" value="ECO:0000314"/>
    <property type="project" value="MGI"/>
</dbReference>
<dbReference type="GO" id="GO:0030425">
    <property type="term" value="C:dendrite"/>
    <property type="evidence" value="ECO:0000266"/>
    <property type="project" value="MGI"/>
</dbReference>
<dbReference type="GO" id="GO:0044292">
    <property type="term" value="C:dendrite terminus"/>
    <property type="evidence" value="ECO:0000314"/>
    <property type="project" value="MGI"/>
</dbReference>
<dbReference type="GO" id="GO:0098982">
    <property type="term" value="C:GABA-ergic synapse"/>
    <property type="evidence" value="ECO:0007669"/>
    <property type="project" value="Ensembl"/>
</dbReference>
<dbReference type="GO" id="GO:0060077">
    <property type="term" value="C:inhibitory synapse"/>
    <property type="evidence" value="ECO:0000314"/>
    <property type="project" value="MGI"/>
</dbReference>
<dbReference type="GO" id="GO:0043005">
    <property type="term" value="C:neuron projection"/>
    <property type="evidence" value="ECO:0000314"/>
    <property type="project" value="MGI"/>
</dbReference>
<dbReference type="GO" id="GO:0044306">
    <property type="term" value="C:neuron projection terminus"/>
    <property type="evidence" value="ECO:0000314"/>
    <property type="project" value="MGI"/>
</dbReference>
<dbReference type="GO" id="GO:0005886">
    <property type="term" value="C:plasma membrane"/>
    <property type="evidence" value="ECO:0000305"/>
    <property type="project" value="MGI"/>
</dbReference>
<dbReference type="GO" id="GO:0048786">
    <property type="term" value="C:presynaptic active zone"/>
    <property type="evidence" value="ECO:0000314"/>
    <property type="project" value="MGI"/>
</dbReference>
<dbReference type="GO" id="GO:0045202">
    <property type="term" value="C:synapse"/>
    <property type="evidence" value="ECO:0000266"/>
    <property type="project" value="MGI"/>
</dbReference>
<dbReference type="GO" id="GO:0008021">
    <property type="term" value="C:synaptic vesicle"/>
    <property type="evidence" value="ECO:0000250"/>
    <property type="project" value="UniProtKB"/>
</dbReference>
<dbReference type="GO" id="GO:0030672">
    <property type="term" value="C:synaptic vesicle membrane"/>
    <property type="evidence" value="ECO:0007669"/>
    <property type="project" value="Ensembl"/>
</dbReference>
<dbReference type="GO" id="GO:0140800">
    <property type="term" value="F:gamma-aminobutyric acid:proton antiporter activity"/>
    <property type="evidence" value="ECO:0000314"/>
    <property type="project" value="UniProtKB"/>
</dbReference>
<dbReference type="GO" id="GO:0015187">
    <property type="term" value="F:glycine transmembrane transporter activity"/>
    <property type="evidence" value="ECO:0000314"/>
    <property type="project" value="MGI"/>
</dbReference>
<dbReference type="GO" id="GO:0140799">
    <property type="term" value="F:glycine:proton antiporter activity"/>
    <property type="evidence" value="ECO:0000314"/>
    <property type="project" value="UniProtKB"/>
</dbReference>
<dbReference type="GO" id="GO:0001762">
    <property type="term" value="P:beta-alanine transport"/>
    <property type="evidence" value="ECO:0000250"/>
    <property type="project" value="UniProtKB"/>
</dbReference>
<dbReference type="GO" id="GO:0051939">
    <property type="term" value="P:gamma-aminobutyric acid import"/>
    <property type="evidence" value="ECO:0000314"/>
    <property type="project" value="UniProtKB"/>
</dbReference>
<dbReference type="GO" id="GO:0015816">
    <property type="term" value="P:glycine transport"/>
    <property type="evidence" value="ECO:0000314"/>
    <property type="project" value="UniProtKB"/>
</dbReference>
<dbReference type="GO" id="GO:0021766">
    <property type="term" value="P:hippocampus development"/>
    <property type="evidence" value="ECO:0007669"/>
    <property type="project" value="Ensembl"/>
</dbReference>
<dbReference type="GO" id="GO:0098700">
    <property type="term" value="P:neurotransmitter loading into synaptic vesicle"/>
    <property type="evidence" value="ECO:0007669"/>
    <property type="project" value="Ensembl"/>
</dbReference>
<dbReference type="FunFam" id="1.20.1740.10:FF:000062">
    <property type="entry name" value="Vesicular inhibitory amino acid transporter"/>
    <property type="match status" value="1"/>
</dbReference>
<dbReference type="InterPro" id="IPR013057">
    <property type="entry name" value="AA_transpt_TM"/>
</dbReference>
<dbReference type="PANTHER" id="PTHR22950">
    <property type="entry name" value="AMINO ACID TRANSPORTER"/>
    <property type="match status" value="1"/>
</dbReference>
<dbReference type="PANTHER" id="PTHR22950:SF689">
    <property type="entry name" value="VESICULAR INHIBITORY AMINO ACID TRANSPORTER"/>
    <property type="match status" value="1"/>
</dbReference>
<dbReference type="Pfam" id="PF01490">
    <property type="entry name" value="Aa_trans"/>
    <property type="match status" value="1"/>
</dbReference>
<keyword id="KW-0025">Alternative splicing</keyword>
<keyword id="KW-0966">Cell projection</keyword>
<keyword id="KW-0968">Cytoplasmic vesicle</keyword>
<keyword id="KW-0472">Membrane</keyword>
<keyword id="KW-0532">Neurotransmitter transport</keyword>
<keyword id="KW-0944">Nitration</keyword>
<keyword id="KW-1185">Reference proteome</keyword>
<keyword id="KW-0770">Synapse</keyword>
<keyword id="KW-0812">Transmembrane</keyword>
<keyword id="KW-1133">Transmembrane helix</keyword>
<keyword id="KW-0813">Transport</keyword>
<proteinExistence type="evidence at protein level"/>
<name>VIAAT_MOUSE</name>
<sequence length="525" mass="57381">MATLLRSKLTNVATSVSNKSQAKVSGMFARMGFQAATDEEAVGFAHCDDLDFEHRQGLQMDILKSEGEPCGDEGAEAPVEGDIHYQRGGAPLPPSGSKDQAVGAGGEFGGHDKPKITAWEAGWNVTNAIQGMFVLGLPYAILHGGYLGLFLIIFAAVVCCYTGKILIACLYEENEDGEVVRVRDSYVAIANACCAPRFPTLGGRVVNVAQIIELVMTCILYVVVSGNLMYNSFPGLPVSQKSWSIIATAVLLPCAFLKNLKAVSKFSLLCTLAHFVINILVIAYCLSRARDWAWEKVKFYIDVKKFPISIGIIVFSYTSQIFLPSLEGNMQQPSEFHCMMNWTHIAACVLKGLFALVAYLTWADETKEVITDNLPGSIRAVVNLFLVAKALLSYPLPFFAAVEVLEKSLFQEGSRAFFPACYGGDGRLKSWGLTLRCALVVFTLLMAIYVPHFALLMGLTGSLTGAGLCFLLPSLFHLRLLWRKLLWHQVFFDVAIFVIGGICSVSGFVHSLEGLIEAYRTNAED</sequence>
<gene>
    <name evidence="15" type="primary">Slc32a1</name>
    <name type="synonym">Vgat</name>
    <name type="synonym">Viaat</name>
</gene>
<evidence type="ECO:0000250" key="1">
    <source>
        <dbReference type="UniProtKB" id="O35458"/>
    </source>
</evidence>
<evidence type="ECO:0000255" key="2"/>
<evidence type="ECO:0000269" key="3">
    <source>
    </source>
</evidence>
<evidence type="ECO:0000269" key="4">
    <source>
    </source>
</evidence>
<evidence type="ECO:0000269" key="5">
    <source>
    </source>
</evidence>
<evidence type="ECO:0000269" key="6">
    <source>
    </source>
</evidence>
<evidence type="ECO:0000269" key="7">
    <source>
    </source>
</evidence>
<evidence type="ECO:0000269" key="8">
    <source>
    </source>
</evidence>
<evidence type="ECO:0000269" key="9">
    <source>
    </source>
</evidence>
<evidence type="ECO:0000303" key="10">
    <source>
    </source>
</evidence>
<evidence type="ECO:0000303" key="11">
    <source>
    </source>
</evidence>
<evidence type="ECO:0000303" key="12">
    <source>
    </source>
</evidence>
<evidence type="ECO:0000305" key="13"/>
<evidence type="ECO:0000305" key="14">
    <source>
    </source>
</evidence>
<evidence type="ECO:0000312" key="15">
    <source>
        <dbReference type="MGI" id="MGI:1194488"/>
    </source>
</evidence>
<evidence type="ECO:0007744" key="16">
    <source>
    </source>
</evidence>